<gene>
    <name type="ORF">DDB_G0274435</name>
</gene>
<evidence type="ECO:0000256" key="1">
    <source>
        <dbReference type="SAM" id="MobiDB-lite"/>
    </source>
</evidence>
<proteinExistence type="predicted"/>
<sequence>MIIKLSIEKGLSECTDFNKVLMFIQPLKLKLIETKTLEYLYSLISKKFKIKKSFLLYTEDGYAIPPSEEGSILKEIDKTFKVLKLNKVKKNEKTDDSGDDLMETDSDNKNKSSESDSSESDSSESESDSSESESESESNETSENESSSSSEPESSLAKKKLLIQQLKRDFQLKEKLQQEQQKQKEAQKPKEKPQQQQQQQQQQQQQQQQQQQQQQQQQQQQQQQKQKQKQQKQQIEQQHKKPPQQQQQQQQQQQQQQQQQQQQQQQQEEVPIGIDDVLTNFSYTISYDNIDELLVEEEKIKRKELEQKKRKLQSQLDNDGLANKNDNNSNNNNYNNSNNNDSNNNNTNKPLSKRQKKLLKKQQNSSQIKENYTINAINNKNDNSTNDSNNNNDNNNNNKNDTNDSNNDDNNNDKKKNNNYSTFKDLTIPNVNDKIAFQKHILLDYVLTVSEYLEGRIEKIDSDILYIRLEPGFDDFEFLDNEFFEESGALGVPVKSLISPKLISDNN</sequence>
<keyword id="KW-1185">Reference proteome</keyword>
<organism>
    <name type="scientific">Dictyostelium discoideum</name>
    <name type="common">Social amoeba</name>
    <dbReference type="NCBI Taxonomy" id="44689"/>
    <lineage>
        <taxon>Eukaryota</taxon>
        <taxon>Amoebozoa</taxon>
        <taxon>Evosea</taxon>
        <taxon>Eumycetozoa</taxon>
        <taxon>Dictyostelia</taxon>
        <taxon>Dictyosteliales</taxon>
        <taxon>Dictyosteliaceae</taxon>
        <taxon>Dictyostelium</taxon>
    </lineage>
</organism>
<feature type="chain" id="PRO_0000348136" description="Putative uncharacterized protein DDB_G0274435">
    <location>
        <begin position="1"/>
        <end position="507"/>
    </location>
</feature>
<feature type="region of interest" description="Disordered" evidence="1">
    <location>
        <begin position="91"/>
        <end position="162"/>
    </location>
</feature>
<feature type="region of interest" description="Disordered" evidence="1">
    <location>
        <begin position="174"/>
        <end position="255"/>
    </location>
</feature>
<feature type="region of interest" description="Disordered" evidence="1">
    <location>
        <begin position="309"/>
        <end position="422"/>
    </location>
</feature>
<feature type="compositionally biased region" description="Acidic residues" evidence="1">
    <location>
        <begin position="116"/>
        <end position="143"/>
    </location>
</feature>
<feature type="compositionally biased region" description="Low complexity" evidence="1">
    <location>
        <begin position="144"/>
        <end position="155"/>
    </location>
</feature>
<feature type="compositionally biased region" description="Basic and acidic residues" evidence="1">
    <location>
        <begin position="174"/>
        <end position="193"/>
    </location>
</feature>
<feature type="compositionally biased region" description="Low complexity" evidence="1">
    <location>
        <begin position="194"/>
        <end position="236"/>
    </location>
</feature>
<feature type="compositionally biased region" description="Low complexity" evidence="1">
    <location>
        <begin position="243"/>
        <end position="255"/>
    </location>
</feature>
<feature type="compositionally biased region" description="Low complexity" evidence="1">
    <location>
        <begin position="313"/>
        <end position="350"/>
    </location>
</feature>
<feature type="compositionally biased region" description="Basic residues" evidence="1">
    <location>
        <begin position="351"/>
        <end position="360"/>
    </location>
</feature>
<feature type="compositionally biased region" description="Low complexity" evidence="1">
    <location>
        <begin position="378"/>
        <end position="409"/>
    </location>
</feature>
<reference key="1">
    <citation type="journal article" date="2002" name="Nature">
        <title>Sequence and analysis of chromosome 2 of Dictyostelium discoideum.</title>
        <authorList>
            <person name="Gloeckner G."/>
            <person name="Eichinger L."/>
            <person name="Szafranski K."/>
            <person name="Pachebat J.A."/>
            <person name="Bankier A.T."/>
            <person name="Dear P.H."/>
            <person name="Lehmann R."/>
            <person name="Baumgart C."/>
            <person name="Parra G."/>
            <person name="Abril J.F."/>
            <person name="Guigo R."/>
            <person name="Kumpf K."/>
            <person name="Tunggal B."/>
            <person name="Cox E.C."/>
            <person name="Quail M.A."/>
            <person name="Platzer M."/>
            <person name="Rosenthal A."/>
            <person name="Noegel A.A."/>
        </authorList>
    </citation>
    <scope>NUCLEOTIDE SEQUENCE [LARGE SCALE GENOMIC DNA]</scope>
    <source>
        <strain>AX4</strain>
    </source>
</reference>
<reference key="2">
    <citation type="journal article" date="2005" name="Nature">
        <title>The genome of the social amoeba Dictyostelium discoideum.</title>
        <authorList>
            <person name="Eichinger L."/>
            <person name="Pachebat J.A."/>
            <person name="Gloeckner G."/>
            <person name="Rajandream M.A."/>
            <person name="Sucgang R."/>
            <person name="Berriman M."/>
            <person name="Song J."/>
            <person name="Olsen R."/>
            <person name="Szafranski K."/>
            <person name="Xu Q."/>
            <person name="Tunggal B."/>
            <person name="Kummerfeld S."/>
            <person name="Madera M."/>
            <person name="Konfortov B.A."/>
            <person name="Rivero F."/>
            <person name="Bankier A.T."/>
            <person name="Lehmann R."/>
            <person name="Hamlin N."/>
            <person name="Davies R."/>
            <person name="Gaudet P."/>
            <person name="Fey P."/>
            <person name="Pilcher K."/>
            <person name="Chen G."/>
            <person name="Saunders D."/>
            <person name="Sodergren E.J."/>
            <person name="Davis P."/>
            <person name="Kerhornou A."/>
            <person name="Nie X."/>
            <person name="Hall N."/>
            <person name="Anjard C."/>
            <person name="Hemphill L."/>
            <person name="Bason N."/>
            <person name="Farbrother P."/>
            <person name="Desany B."/>
            <person name="Just E."/>
            <person name="Morio T."/>
            <person name="Rost R."/>
            <person name="Churcher C.M."/>
            <person name="Cooper J."/>
            <person name="Haydock S."/>
            <person name="van Driessche N."/>
            <person name="Cronin A."/>
            <person name="Goodhead I."/>
            <person name="Muzny D.M."/>
            <person name="Mourier T."/>
            <person name="Pain A."/>
            <person name="Lu M."/>
            <person name="Harper D."/>
            <person name="Lindsay R."/>
            <person name="Hauser H."/>
            <person name="James K.D."/>
            <person name="Quiles M."/>
            <person name="Madan Babu M."/>
            <person name="Saito T."/>
            <person name="Buchrieser C."/>
            <person name="Wardroper A."/>
            <person name="Felder M."/>
            <person name="Thangavelu M."/>
            <person name="Johnson D."/>
            <person name="Knights A."/>
            <person name="Loulseged H."/>
            <person name="Mungall K.L."/>
            <person name="Oliver K."/>
            <person name="Price C."/>
            <person name="Quail M.A."/>
            <person name="Urushihara H."/>
            <person name="Hernandez J."/>
            <person name="Rabbinowitsch E."/>
            <person name="Steffen D."/>
            <person name="Sanders M."/>
            <person name="Ma J."/>
            <person name="Kohara Y."/>
            <person name="Sharp S."/>
            <person name="Simmonds M.N."/>
            <person name="Spiegler S."/>
            <person name="Tivey A."/>
            <person name="Sugano S."/>
            <person name="White B."/>
            <person name="Walker D."/>
            <person name="Woodward J.R."/>
            <person name="Winckler T."/>
            <person name="Tanaka Y."/>
            <person name="Shaulsky G."/>
            <person name="Schleicher M."/>
            <person name="Weinstock G.M."/>
            <person name="Rosenthal A."/>
            <person name="Cox E.C."/>
            <person name="Chisholm R.L."/>
            <person name="Gibbs R.A."/>
            <person name="Loomis W.F."/>
            <person name="Platzer M."/>
            <person name="Kay R.R."/>
            <person name="Williams J.G."/>
            <person name="Dear P.H."/>
            <person name="Noegel A.A."/>
            <person name="Barrell B.G."/>
            <person name="Kuspa A."/>
        </authorList>
    </citation>
    <scope>NUCLEOTIDE SEQUENCE [LARGE SCALE GENOMIC DNA]</scope>
    <source>
        <strain>AX4</strain>
    </source>
</reference>
<name>Y7634_DICDI</name>
<accession>Q869T2</accession>
<accession>Q554X6</accession>
<protein>
    <recommendedName>
        <fullName>Putative uncharacterized protein DDB_G0274435</fullName>
    </recommendedName>
</protein>
<dbReference type="EMBL" id="AAFI02000012">
    <property type="protein sequence ID" value="EAL70110.1"/>
    <property type="molecule type" value="Genomic_DNA"/>
</dbReference>
<dbReference type="RefSeq" id="XP_644197.1">
    <property type="nucleotide sequence ID" value="XM_639105.1"/>
</dbReference>
<dbReference type="FunCoup" id="Q869T2">
    <property type="interactions" value="131"/>
</dbReference>
<dbReference type="STRING" id="44689.Q869T2"/>
<dbReference type="PaxDb" id="44689-DDB0167634"/>
<dbReference type="EnsemblProtists" id="EAL70110">
    <property type="protein sequence ID" value="EAL70110"/>
    <property type="gene ID" value="DDB_G0274435"/>
</dbReference>
<dbReference type="GeneID" id="8619626"/>
<dbReference type="KEGG" id="ddi:DDB_G0274435"/>
<dbReference type="dictyBase" id="DDB_G0274435"/>
<dbReference type="VEuPathDB" id="AmoebaDB:DDB_G0274435"/>
<dbReference type="eggNOG" id="ENOG502RH7S">
    <property type="taxonomic scope" value="Eukaryota"/>
</dbReference>
<dbReference type="HOGENOM" id="CLU_537972_0_0_1"/>
<dbReference type="InParanoid" id="Q869T2"/>
<dbReference type="OMA" id="DKIAFQK"/>
<dbReference type="PRO" id="PR:Q869T2"/>
<dbReference type="Proteomes" id="UP000002195">
    <property type="component" value="Chromosome 2"/>
</dbReference>
<dbReference type="InterPro" id="IPR031722">
    <property type="entry name" value="Coilin_N"/>
</dbReference>
<dbReference type="Pfam" id="PF15862">
    <property type="entry name" value="Coilin_N"/>
    <property type="match status" value="1"/>
</dbReference>